<reference key="1">
    <citation type="journal article" date="1994" name="Yeast">
        <title>Sequencing of chromosome I of Saccharomyces cerevisiae: analysis of the 42 kbp SPO7-CENI-CDC15 region.</title>
        <authorList>
            <person name="Clark M.W."/>
            <person name="Keng T."/>
            <person name="Storms R.K."/>
            <person name="Zhong W.-W."/>
            <person name="Fortin N."/>
            <person name="Zeng B."/>
            <person name="Delaney S."/>
            <person name="Ouellette B.F.F."/>
            <person name="Barton A.B."/>
            <person name="Kaback D.B."/>
            <person name="Bussey H."/>
        </authorList>
    </citation>
    <scope>NUCLEOTIDE SEQUENCE [GENOMIC DNA]</scope>
    <source>
        <strain>ATCC 204511 / S288c / AB972</strain>
    </source>
</reference>
<reference key="2">
    <citation type="journal article" date="1995" name="Proc. Natl. Acad. Sci. U.S.A.">
        <title>The nucleotide sequence of chromosome I from Saccharomyces cerevisiae.</title>
        <authorList>
            <person name="Bussey H."/>
            <person name="Kaback D.B."/>
            <person name="Zhong W.-W."/>
            <person name="Vo D.H."/>
            <person name="Clark M.W."/>
            <person name="Fortin N."/>
            <person name="Hall J."/>
            <person name="Ouellette B.F.F."/>
            <person name="Keng T."/>
            <person name="Barton A.B."/>
            <person name="Su Y."/>
            <person name="Davies C.J."/>
            <person name="Storms R.K."/>
        </authorList>
    </citation>
    <scope>NUCLEOTIDE SEQUENCE [LARGE SCALE GENOMIC DNA]</scope>
    <source>
        <strain>ATCC 204508 / S288c</strain>
    </source>
</reference>
<reference key="3">
    <citation type="journal article" date="2014" name="G3 (Bethesda)">
        <title>The reference genome sequence of Saccharomyces cerevisiae: Then and now.</title>
        <authorList>
            <person name="Engel S.R."/>
            <person name="Dietrich F.S."/>
            <person name="Fisk D.G."/>
            <person name="Binkley G."/>
            <person name="Balakrishnan R."/>
            <person name="Costanzo M.C."/>
            <person name="Dwight S.S."/>
            <person name="Hitz B.C."/>
            <person name="Karra K."/>
            <person name="Nash R.S."/>
            <person name="Weng S."/>
            <person name="Wong E.D."/>
            <person name="Lloyd P."/>
            <person name="Skrzypek M.S."/>
            <person name="Miyasato S.R."/>
            <person name="Simison M."/>
            <person name="Cherry J.M."/>
        </authorList>
    </citation>
    <scope>GENOME REANNOTATION</scope>
    <source>
        <strain>ATCC 204508 / S288c</strain>
    </source>
</reference>
<reference key="4">
    <citation type="journal article" date="2007" name="Genome Res.">
        <title>Approaching a complete repository of sequence-verified protein-encoding clones for Saccharomyces cerevisiae.</title>
        <authorList>
            <person name="Hu Y."/>
            <person name="Rolfs A."/>
            <person name="Bhullar B."/>
            <person name="Murthy T.V.S."/>
            <person name="Zhu C."/>
            <person name="Berger M.F."/>
            <person name="Camargo A.A."/>
            <person name="Kelley F."/>
            <person name="McCarron S."/>
            <person name="Jepson D."/>
            <person name="Richardson A."/>
            <person name="Raphael J."/>
            <person name="Moreira D."/>
            <person name="Taycher E."/>
            <person name="Zuo D."/>
            <person name="Mohr S."/>
            <person name="Kane M.F."/>
            <person name="Williamson J."/>
            <person name="Simpson A.J.G."/>
            <person name="Bulyk M.L."/>
            <person name="Harlow E."/>
            <person name="Marsischky G."/>
            <person name="Kolodner R.D."/>
            <person name="LaBaer J."/>
        </authorList>
    </citation>
    <scope>NUCLEOTIDE SEQUENCE [GENOMIC DNA]</scope>
    <source>
        <strain>ATCC 204508 / S288c</strain>
    </source>
</reference>
<reference key="5">
    <citation type="journal article" date="2000" name="J. Cell Biol.">
        <title>The yeast nuclear pore complex: composition, architecture, and transport mechanism.</title>
        <authorList>
            <person name="Rout M.P."/>
            <person name="Aitchison J.D."/>
            <person name="Suprapto A."/>
            <person name="Hjertaas K."/>
            <person name="Zhao Y."/>
            <person name="Chait B.T."/>
        </authorList>
    </citation>
    <scope>FUNCTION</scope>
    <scope>IDENTIFICATION IN THE NUCLEAR PORE COMPLEX</scope>
    <scope>SUBCELLULAR LOCATION</scope>
</reference>
<reference key="6">
    <citation type="journal article" date="2001" name="J. Biol. Chem.">
        <title>Proteomic analysis of nucleoporin interacting proteins.</title>
        <authorList>
            <person name="Allen N.P."/>
            <person name="Huang L."/>
            <person name="Burlingame A."/>
            <person name="Rexach M."/>
        </authorList>
    </citation>
    <scope>FUNCTION</scope>
    <scope>NUCLEOPORIN INTERACTING PROTEINS</scope>
</reference>
<reference key="7">
    <citation type="journal article" date="2001" name="J. Cell Biol.">
        <title>The nucleoporin Nup60p functions as a Gsp1p-GTP-sensitive tether for Nup2p at the nuclear pore complex.</title>
        <authorList>
            <person name="Denning D.P."/>
            <person name="Mykytka B."/>
            <person name="Allen N.P."/>
            <person name="Huang L."/>
            <person name="Burlingame A."/>
            <person name="Rexach M."/>
        </authorList>
    </citation>
    <scope>FUNCTION</scope>
    <scope>INTERACTION WITH GSP1-GTP; NUP2; SRM1; KAP123 AND KAP95-SRP1</scope>
</reference>
<reference key="8">
    <citation type="journal article" date="2003" name="Nature">
        <title>Global analysis of protein expression in yeast.</title>
        <authorList>
            <person name="Ghaemmaghami S."/>
            <person name="Huh W.-K."/>
            <person name="Bower K."/>
            <person name="Howson R.W."/>
            <person name="Belle A."/>
            <person name="Dephoure N."/>
            <person name="O'Shea E.K."/>
            <person name="Weissman J.S."/>
        </authorList>
    </citation>
    <scope>LEVEL OF PROTEIN EXPRESSION [LARGE SCALE ANALYSIS]</scope>
</reference>
<reference key="9">
    <citation type="journal article" date="2003" name="Proc. Natl. Acad. Sci. U.S.A.">
        <title>Disorder in the nuclear pore complex: the FG repeat regions of nucleoporins are natively unfolded.</title>
        <authorList>
            <person name="Denning D.P."/>
            <person name="Patel S.S."/>
            <person name="Uversky V."/>
            <person name="Fink A.L."/>
            <person name="Rexach M."/>
        </authorList>
    </citation>
    <scope>FUNCTION</scope>
    <scope>FG REPEAT STRUCTURE</scope>
</reference>
<reference key="10">
    <citation type="journal article" date="2004" name="Nat. Cell Biol.">
        <title>Minimal nuclear pore complexes define FG repeat domains essential for transport.</title>
        <authorList>
            <person name="Strawn L.A."/>
            <person name="Shen T.X."/>
            <person name="Shulga N."/>
            <person name="Goldfarb D.S."/>
            <person name="Wente S.R."/>
        </authorList>
    </citation>
    <scope>FUNCTION</scope>
    <scope>FG REPEATS IN NPC TRANSPORT</scope>
</reference>
<reference key="11">
    <citation type="journal article" date="2003" name="Dev. Cell">
        <title>Peering through the pore: nuclear pore complex structure, assembly, and function.</title>
        <authorList>
            <person name="Suntharalingam M."/>
            <person name="Wente S.R."/>
        </authorList>
    </citation>
    <scope>REVIEW</scope>
</reference>
<reference key="12">
    <citation type="journal article" date="2003" name="Nature">
        <title>Targets of the cyclin-dependent kinase Cdk1.</title>
        <authorList>
            <person name="Ubersax J.A."/>
            <person name="Woodbury E.L."/>
            <person name="Quang P.N."/>
            <person name="Paraz M."/>
            <person name="Blethrow J.D."/>
            <person name="Shah K."/>
            <person name="Shokat K.M."/>
            <person name="Morgan D.O."/>
        </authorList>
    </citation>
    <scope>PHOSPHORYLATION BY CDC28</scope>
</reference>
<reference key="13">
    <citation type="journal article" date="2005" name="Mol. Cell. Proteomics">
        <title>Quantitative phosphoproteomics applied to the yeast pheromone signaling pathway.</title>
        <authorList>
            <person name="Gruhler A."/>
            <person name="Olsen J.V."/>
            <person name="Mohammed S."/>
            <person name="Mortensen P."/>
            <person name="Faergeman N.J."/>
            <person name="Mann M."/>
            <person name="Jensen O.N."/>
        </authorList>
    </citation>
    <scope>IDENTIFICATION BY MASS SPECTROMETRY [LARGE SCALE ANALYSIS]</scope>
    <source>
        <strain>YAL6B</strain>
    </source>
</reference>
<reference key="14">
    <citation type="journal article" date="2007" name="J. Proteome Res.">
        <title>Large-scale phosphorylation analysis of alpha-factor-arrested Saccharomyces cerevisiae.</title>
        <authorList>
            <person name="Li X."/>
            <person name="Gerber S.A."/>
            <person name="Rudner A.D."/>
            <person name="Beausoleil S.A."/>
            <person name="Haas W."/>
            <person name="Villen J."/>
            <person name="Elias J.E."/>
            <person name="Gygi S.P."/>
        </authorList>
    </citation>
    <scope>PHOSPHORYLATION [LARGE SCALE ANALYSIS] AT SER-10 AND SER-81</scope>
    <scope>IDENTIFICATION BY MASS SPECTROMETRY [LARGE SCALE ANALYSIS]</scope>
    <source>
        <strain>ADR376</strain>
    </source>
</reference>
<reference key="15">
    <citation type="journal article" date="2007" name="Proc. Natl. Acad. Sci. U.S.A.">
        <title>Analysis of phosphorylation sites on proteins from Saccharomyces cerevisiae by electron transfer dissociation (ETD) mass spectrometry.</title>
        <authorList>
            <person name="Chi A."/>
            <person name="Huttenhower C."/>
            <person name="Geer L.Y."/>
            <person name="Coon J.J."/>
            <person name="Syka J.E.P."/>
            <person name="Bai D.L."/>
            <person name="Shabanowitz J."/>
            <person name="Burke D.J."/>
            <person name="Troyanskaya O.G."/>
            <person name="Hunt D.F."/>
        </authorList>
    </citation>
    <scope>PHOSPHORYLATION [LARGE SCALE ANALYSIS] AT SER-10; SER-49; SER-360; SER-374; SER-480 AND SER-483</scope>
    <scope>IDENTIFICATION BY MASS SPECTROMETRY [LARGE SCALE ANALYSIS]</scope>
</reference>
<reference key="16">
    <citation type="journal article" date="2008" name="Mol. Cell. Proteomics">
        <title>A multidimensional chromatography technology for in-depth phosphoproteome analysis.</title>
        <authorList>
            <person name="Albuquerque C.P."/>
            <person name="Smolka M.B."/>
            <person name="Payne S.H."/>
            <person name="Bafna V."/>
            <person name="Eng J."/>
            <person name="Zhou H."/>
        </authorList>
    </citation>
    <scope>PHOSPHORYLATION [LARGE SCALE ANALYSIS] AT SER-10; SER-81; SER-352 AND THR-460</scope>
    <scope>IDENTIFICATION BY MASS SPECTROMETRY [LARGE SCALE ANALYSIS]</scope>
</reference>
<reference key="17">
    <citation type="journal article" date="2009" name="Science">
        <title>Global analysis of Cdk1 substrate phosphorylation sites provides insights into evolution.</title>
        <authorList>
            <person name="Holt L.J."/>
            <person name="Tuch B.B."/>
            <person name="Villen J."/>
            <person name="Johnson A.D."/>
            <person name="Gygi S.P."/>
            <person name="Morgan D.O."/>
        </authorList>
    </citation>
    <scope>PHOSPHORYLATION [LARGE SCALE ANALYSIS] AT SER-10; SER-81; SER-89; SER-162; SER-171; SER-214; SER-222; SER-352 AND SER-382</scope>
    <scope>IDENTIFICATION BY MASS SPECTROMETRY [LARGE SCALE ANALYSIS]</scope>
</reference>
<keyword id="KW-0175">Coiled coil</keyword>
<keyword id="KW-0472">Membrane</keyword>
<keyword id="KW-0509">mRNA transport</keyword>
<keyword id="KW-0906">Nuclear pore complex</keyword>
<keyword id="KW-0539">Nucleus</keyword>
<keyword id="KW-0597">Phosphoprotein</keyword>
<keyword id="KW-0653">Protein transport</keyword>
<keyword id="KW-1185">Reference proteome</keyword>
<keyword id="KW-0677">Repeat</keyword>
<keyword id="KW-0811">Translocation</keyword>
<keyword id="KW-0813">Transport</keyword>
<comment type="function">
    <text evidence="3 4 5 6 9">Functions as a component of the nuclear pore complex (NPC). NPC components, collectively referred to as nucleoporins (NUPs), can play the role of both NPC structural components and of docking or interaction partners for transiently associated nuclear transport factors. Active directional transport is assured by both, a Phe-Gly (FG) repeat affinity gradient for these transport factors across the NPC and a transport cofactor concentration gradient across the nuclear envelope (GSP1 and GSP2 GTPases associated predominantly with GTP in the nucleus, with GDP in the cytoplasm).</text>
</comment>
<comment type="subunit">
    <text evidence="3 5">Component of the nuclear pore complex (NPC). NPC constitutes the exclusive means of nucleocytoplasmic transport. NPCs allow the passive diffusion of ions and small molecules and the active, nuclear transport receptor-mediated bidirectional transport of macromolecules such as proteins, RNAs, ribonucleoparticles (RNPs), and ribosomal subunits across the nuclear envelope. Due to its 8-fold rotational symmetry, all subunits are present with 8 copies or multiples thereof. Binds to NUP1 and NUP2 forming the nuclear basket and the distal ring. The interaction with NUP2 is GSP1-GTP-dependent. Interacts through its FG repeats with karyopherins, such as KAP123 and KAP95-SRP1 (KAP60). Also interacts with GSP1-GTP and SRM1 (PRP20), where NUP60 reduces SRM1 activity, thus inhibiting GSP1 guanine nucleotide dissociation.</text>
</comment>
<comment type="interaction">
    <interactant intactId="EBI-20731">
        <id>P39705</id>
    </interactant>
    <interactant intactId="EBI-9145">
        <id>Q06142</id>
        <label>KAP95</label>
    </interactant>
    <organismsDiffer>false</organismsDiffer>
    <experiments>4</experiments>
</comment>
<comment type="interaction">
    <interactant intactId="EBI-20731">
        <id>P39705</id>
    </interactant>
    <interactant intactId="EBI-12401">
        <id>P32499</id>
        <label>NUP2</label>
    </interactant>
    <organismsDiffer>false</organismsDiffer>
    <experiments>3</experiments>
</comment>
<comment type="subcellular location">
    <subcellularLocation>
        <location evidence="3">Nucleus</location>
        <location evidence="3">Nuclear pore complex</location>
    </subcellularLocation>
    <subcellularLocation>
        <location>Nucleus membrane</location>
        <topology>Peripheral membrane protein</topology>
        <orientation>Nucleoplasmic side</orientation>
    </subcellularLocation>
    <text>Nuclear basket.</text>
</comment>
<comment type="domain">
    <text>Contains FG repeats. FG repeats are interaction sites for karyopherins (importins, exportins) and form probably an affinity gradient, guiding the transport proteins unidirectionally with their cargo through the NPC. FG repeat regions are highly flexible and lack ordered secondary structure. The overall conservation of FG repeats regarding exact sequence, spacing, and repeat unit length is limited. FG repeat types and their physico-chemical environment change across the NPC from the nucleoplasmic to the cytoplasmic side.</text>
</comment>
<comment type="PTM">
    <text evidence="8">Phosphorylated by CDC28.</text>
</comment>
<comment type="miscellaneous">
    <text evidence="7">Present with 4590 molecules/cell in log phase SD medium.</text>
</comment>
<proteinExistence type="evidence at protein level"/>
<accession>P39705</accession>
<accession>D6VPL6</accession>
<organism>
    <name type="scientific">Saccharomyces cerevisiae (strain ATCC 204508 / S288c)</name>
    <name type="common">Baker's yeast</name>
    <dbReference type="NCBI Taxonomy" id="559292"/>
    <lineage>
        <taxon>Eukaryota</taxon>
        <taxon>Fungi</taxon>
        <taxon>Dikarya</taxon>
        <taxon>Ascomycota</taxon>
        <taxon>Saccharomycotina</taxon>
        <taxon>Saccharomycetes</taxon>
        <taxon>Saccharomycetales</taxon>
        <taxon>Saccharomycetaceae</taxon>
        <taxon>Saccharomyces</taxon>
    </lineage>
</organism>
<dbReference type="EMBL" id="L22015">
    <property type="protein sequence ID" value="AAC04957.1"/>
    <property type="molecule type" value="Genomic_DNA"/>
</dbReference>
<dbReference type="EMBL" id="AY692943">
    <property type="protein sequence ID" value="AAT92962.1"/>
    <property type="molecule type" value="Genomic_DNA"/>
</dbReference>
<dbReference type="EMBL" id="BK006935">
    <property type="protein sequence ID" value="DAA06986.1"/>
    <property type="molecule type" value="Genomic_DNA"/>
</dbReference>
<dbReference type="PIR" id="S40900">
    <property type="entry name" value="S40900"/>
</dbReference>
<dbReference type="RefSeq" id="NP_009401.1">
    <property type="nucleotide sequence ID" value="NM_001178209.1"/>
</dbReference>
<dbReference type="BioGRID" id="31790">
    <property type="interactions" value="394"/>
</dbReference>
<dbReference type="ComplexPortal" id="CPX-824">
    <property type="entry name" value="Nuclear pore complex"/>
</dbReference>
<dbReference type="DIP" id="DIP-5821N"/>
<dbReference type="FunCoup" id="P39705">
    <property type="interactions" value="349"/>
</dbReference>
<dbReference type="IntAct" id="P39705">
    <property type="interactions" value="17"/>
</dbReference>
<dbReference type="MINT" id="P39705"/>
<dbReference type="STRING" id="4932.YAR002W"/>
<dbReference type="TCDB" id="1.I.1.1.1">
    <property type="family name" value="the nuclear pore complex (npc) family"/>
</dbReference>
<dbReference type="GlyGen" id="P39705">
    <property type="glycosylation" value="3 sites, 1 O-linked glycan (3 sites)"/>
</dbReference>
<dbReference type="iPTMnet" id="P39705"/>
<dbReference type="PaxDb" id="4932-YAR002W"/>
<dbReference type="PeptideAtlas" id="P39705"/>
<dbReference type="DNASU" id="851263"/>
<dbReference type="EnsemblFungi" id="YAR002W_mRNA">
    <property type="protein sequence ID" value="YAR002W"/>
    <property type="gene ID" value="YAR002W"/>
</dbReference>
<dbReference type="GeneID" id="851263"/>
<dbReference type="KEGG" id="sce:YAR002W"/>
<dbReference type="AGR" id="SGD:S000000063"/>
<dbReference type="SGD" id="S000000063">
    <property type="gene designation" value="NUP60"/>
</dbReference>
<dbReference type="VEuPathDB" id="FungiDB:YAR002W"/>
<dbReference type="eggNOG" id="ENOG502RZ4Z">
    <property type="taxonomic scope" value="Eukaryota"/>
</dbReference>
<dbReference type="HOGENOM" id="CLU_037434_0_0_1"/>
<dbReference type="InParanoid" id="P39705"/>
<dbReference type="OMA" id="NDNEGKH"/>
<dbReference type="OrthoDB" id="5370852at2759"/>
<dbReference type="BioCyc" id="YEAST:G3O-28867-MONOMER"/>
<dbReference type="BioGRID-ORCS" id="851263">
    <property type="hits" value="2 hits in 10 CRISPR screens"/>
</dbReference>
<dbReference type="PRO" id="PR:P39705"/>
<dbReference type="Proteomes" id="UP000002311">
    <property type="component" value="Chromosome I"/>
</dbReference>
<dbReference type="RNAct" id="P39705">
    <property type="molecule type" value="protein"/>
</dbReference>
<dbReference type="GO" id="GO:0005829">
    <property type="term" value="C:cytosol"/>
    <property type="evidence" value="ECO:0000314"/>
    <property type="project" value="SGD"/>
</dbReference>
<dbReference type="GO" id="GO:0005635">
    <property type="term" value="C:nuclear envelope"/>
    <property type="evidence" value="ECO:0000303"/>
    <property type="project" value="ComplexPortal"/>
</dbReference>
<dbReference type="GO" id="GO:0031965">
    <property type="term" value="C:nuclear membrane"/>
    <property type="evidence" value="ECO:0007669"/>
    <property type="project" value="UniProtKB-SubCell"/>
</dbReference>
<dbReference type="GO" id="GO:0005643">
    <property type="term" value="C:nuclear pore"/>
    <property type="evidence" value="ECO:0000314"/>
    <property type="project" value="SGD"/>
</dbReference>
<dbReference type="GO" id="GO:0044613">
    <property type="term" value="C:nuclear pore central transport channel"/>
    <property type="evidence" value="ECO:0000314"/>
    <property type="project" value="SGD"/>
</dbReference>
<dbReference type="GO" id="GO:0044615">
    <property type="term" value="C:nuclear pore nuclear basket"/>
    <property type="evidence" value="ECO:0000314"/>
    <property type="project" value="SGD"/>
</dbReference>
<dbReference type="GO" id="GO:0005634">
    <property type="term" value="C:nucleus"/>
    <property type="evidence" value="ECO:0000314"/>
    <property type="project" value="SGD"/>
</dbReference>
<dbReference type="GO" id="GO:0005543">
    <property type="term" value="F:phospholipid binding"/>
    <property type="evidence" value="ECO:0000314"/>
    <property type="project" value="SGD"/>
</dbReference>
<dbReference type="GO" id="GO:0017056">
    <property type="term" value="F:structural constituent of nuclear pore"/>
    <property type="evidence" value="ECO:0000315"/>
    <property type="project" value="SGD"/>
</dbReference>
<dbReference type="GO" id="GO:0051276">
    <property type="term" value="P:chromosome organization"/>
    <property type="evidence" value="ECO:0000315"/>
    <property type="project" value="SGD"/>
</dbReference>
<dbReference type="GO" id="GO:0006302">
    <property type="term" value="P:double-strand break repair"/>
    <property type="evidence" value="ECO:0000315"/>
    <property type="project" value="SGD"/>
</dbReference>
<dbReference type="GO" id="GO:0008298">
    <property type="term" value="P:intracellular mRNA localization"/>
    <property type="evidence" value="ECO:0000315"/>
    <property type="project" value="SGD"/>
</dbReference>
<dbReference type="GO" id="GO:0031990">
    <property type="term" value="P:mRNA export from nucleus in response to heat stress"/>
    <property type="evidence" value="ECO:0000315"/>
    <property type="project" value="SGD"/>
</dbReference>
<dbReference type="GO" id="GO:0006607">
    <property type="term" value="P:NLS-bearing protein import into nucleus"/>
    <property type="evidence" value="ECO:0000315"/>
    <property type="project" value="SGD"/>
</dbReference>
<dbReference type="GO" id="GO:0006913">
    <property type="term" value="P:nucleocytoplasmic transport"/>
    <property type="evidence" value="ECO:0000315"/>
    <property type="project" value="SGD"/>
</dbReference>
<dbReference type="GO" id="GO:0016973">
    <property type="term" value="P:poly(A)+ mRNA export from nucleus"/>
    <property type="evidence" value="ECO:0000315"/>
    <property type="project" value="SGD"/>
</dbReference>
<dbReference type="GO" id="GO:0000973">
    <property type="term" value="P:post-transcriptional tethering of RNA polymerase II gene DNA at nuclear periphery"/>
    <property type="evidence" value="ECO:0000315"/>
    <property type="project" value="SGD"/>
</dbReference>
<dbReference type="GO" id="GO:0006611">
    <property type="term" value="P:protein export from nucleus"/>
    <property type="evidence" value="ECO:0000315"/>
    <property type="project" value="SGD"/>
</dbReference>
<dbReference type="GO" id="GO:0060188">
    <property type="term" value="P:regulation of protein desumoylation"/>
    <property type="evidence" value="ECO:0000316"/>
    <property type="project" value="SGD"/>
</dbReference>
<dbReference type="GO" id="GO:0030466">
    <property type="term" value="P:silent mating-type cassette heterochromatin formation"/>
    <property type="evidence" value="ECO:0000315"/>
    <property type="project" value="SGD"/>
</dbReference>
<dbReference type="GO" id="GO:0034398">
    <property type="term" value="P:telomere tethering at nuclear periphery"/>
    <property type="evidence" value="ECO:0000315"/>
    <property type="project" value="SGD"/>
</dbReference>
<dbReference type="GO" id="GO:0000972">
    <property type="term" value="P:transcription-dependent tethering of RNA polymerase II gene DNA at nuclear periphery"/>
    <property type="evidence" value="ECO:0000315"/>
    <property type="project" value="SGD"/>
</dbReference>
<dbReference type="InterPro" id="IPR034432">
    <property type="entry name" value="Nup60"/>
</dbReference>
<dbReference type="PANTHER" id="PTHR28284">
    <property type="entry name" value="NUCLEOPORIN NUP60"/>
    <property type="match status" value="1"/>
</dbReference>
<dbReference type="PANTHER" id="PTHR28284:SF1">
    <property type="entry name" value="NUCLEOPORIN NUP60"/>
    <property type="match status" value="1"/>
</dbReference>
<feature type="chain" id="PRO_0000204879" description="Nucleoporin NUP60">
    <location>
        <begin position="1"/>
        <end position="539"/>
    </location>
</feature>
<feature type="repeat" description="FXF 1">
    <location>
        <begin position="399"/>
        <end position="401"/>
    </location>
</feature>
<feature type="repeat" description="FXF 2">
    <location>
        <begin position="427"/>
        <end position="429"/>
    </location>
</feature>
<feature type="repeat" description="FXF 3">
    <location>
        <begin position="469"/>
        <end position="471"/>
    </location>
</feature>
<feature type="repeat" description="FXF 4">
    <location>
        <begin position="509"/>
        <end position="511"/>
    </location>
</feature>
<feature type="region of interest" description="Disordered" evidence="2">
    <location>
        <begin position="44"/>
        <end position="80"/>
    </location>
</feature>
<feature type="region of interest" description="Disordered" evidence="2">
    <location>
        <begin position="242"/>
        <end position="267"/>
    </location>
</feature>
<feature type="region of interest" description="Disordered" evidence="2">
    <location>
        <begin position="305"/>
        <end position="329"/>
    </location>
</feature>
<feature type="region of interest" description="Disordered" evidence="2">
    <location>
        <begin position="347"/>
        <end position="493"/>
    </location>
</feature>
<feature type="coiled-coil region" evidence="1">
    <location>
        <begin position="91"/>
        <end position="118"/>
    </location>
</feature>
<feature type="compositionally biased region" description="Polar residues" evidence="2">
    <location>
        <begin position="242"/>
        <end position="252"/>
    </location>
</feature>
<feature type="compositionally biased region" description="Polar residues" evidence="2">
    <location>
        <begin position="258"/>
        <end position="267"/>
    </location>
</feature>
<feature type="compositionally biased region" description="Polar residues" evidence="2">
    <location>
        <begin position="347"/>
        <end position="359"/>
    </location>
</feature>
<feature type="compositionally biased region" description="Polar residues" evidence="2">
    <location>
        <begin position="395"/>
        <end position="433"/>
    </location>
</feature>
<feature type="compositionally biased region" description="Polar residues" evidence="2">
    <location>
        <begin position="448"/>
        <end position="485"/>
    </location>
</feature>
<feature type="modified residue" description="Phosphoserine" evidence="10 11 12 13">
    <location>
        <position position="10"/>
    </location>
</feature>
<feature type="modified residue" description="Phosphoserine" evidence="10">
    <location>
        <position position="49"/>
    </location>
</feature>
<feature type="modified residue" description="Phosphoserine" evidence="11 12 13">
    <location>
        <position position="81"/>
    </location>
</feature>
<feature type="modified residue" description="Phosphoserine" evidence="13">
    <location>
        <position position="89"/>
    </location>
</feature>
<feature type="modified residue" description="Phosphoserine" evidence="13">
    <location>
        <position position="162"/>
    </location>
</feature>
<feature type="modified residue" description="Phosphoserine" evidence="13">
    <location>
        <position position="171"/>
    </location>
</feature>
<feature type="modified residue" description="Phosphoserine" evidence="13">
    <location>
        <position position="214"/>
    </location>
</feature>
<feature type="modified residue" description="Phosphoserine" evidence="13">
    <location>
        <position position="222"/>
    </location>
</feature>
<feature type="modified residue" description="Phosphoserine" evidence="12 13">
    <location>
        <position position="352"/>
    </location>
</feature>
<feature type="modified residue" description="Phosphoserine" evidence="10">
    <location>
        <position position="360"/>
    </location>
</feature>
<feature type="modified residue" description="Phosphoserine" evidence="10">
    <location>
        <position position="374"/>
    </location>
</feature>
<feature type="modified residue" description="Phosphoserine" evidence="13">
    <location>
        <position position="382"/>
    </location>
</feature>
<feature type="modified residue" description="Phosphothreonine" evidence="12">
    <location>
        <position position="460"/>
    </location>
</feature>
<feature type="modified residue" description="Phosphoserine" evidence="10">
    <location>
        <position position="480"/>
    </location>
</feature>
<feature type="modified residue" description="Phosphoserine" evidence="10">
    <location>
        <position position="483"/>
    </location>
</feature>
<sequence length="539" mass="59039">MHRKSLRRASATVPSAPYRKQIISNAHNKPSLFSKIKTFFTQKDSARVSPRNNVANKQPRNESFNRRISSMPGGYFHSEISPDSTVNRSVVVSAVGEARNDIENKEEEYDETHETNISNAKLANFFSKKGNEPLSEIEIEGVMSLLQKSSKSMITSEGEQKSAEGNNIDQSLILKESGSTPISISNAPTFNPKYDTSNASMNTTLGSIGSRKYSFNYSSLPSPYKTTVYRYSAAKKIPDTYTANTSAQSIASAKSVRSGVSKSAPSKKISNTAAALVSLLDENDSKKNNAASELANPYSSYVSQIRKHKRVSPNAAPRQEISEEETTVKPLFQNVPEQGEEPMKQLNATKISPSAPSKDSFTKYKPARSSSLRSNVVVAETSPEKKDGGDKPPSSAFNFSFNTSRNVEPTENAYKSENAPSASSKEFNFTNLQAKPLVGKPKTELTKGDSTPVQPDLSVTPQKSSSKGFVFNSVQKKSRSNLSQENDNEGKHISASIDNDFSEEKAEEFDFNVPVVSKQLGNGLVDENKVEAFKSLYTF</sequence>
<name>NUP60_YEAST</name>
<gene>
    <name type="primary">NUP60</name>
    <name type="synonym">FUN17</name>
    <name type="ordered locus">YAR002W</name>
</gene>
<protein>
    <recommendedName>
        <fullName>Nucleoporin NUP60</fullName>
    </recommendedName>
    <alternativeName>
        <fullName>Nuclear pore protein NUP60</fullName>
    </alternativeName>
</protein>
<evidence type="ECO:0000255" key="1"/>
<evidence type="ECO:0000256" key="2">
    <source>
        <dbReference type="SAM" id="MobiDB-lite"/>
    </source>
</evidence>
<evidence type="ECO:0000269" key="3">
    <source>
    </source>
</evidence>
<evidence type="ECO:0000269" key="4">
    <source>
    </source>
</evidence>
<evidence type="ECO:0000269" key="5">
    <source>
    </source>
</evidence>
<evidence type="ECO:0000269" key="6">
    <source>
    </source>
</evidence>
<evidence type="ECO:0000269" key="7">
    <source>
    </source>
</evidence>
<evidence type="ECO:0000269" key="8">
    <source>
    </source>
</evidence>
<evidence type="ECO:0000269" key="9">
    <source>
    </source>
</evidence>
<evidence type="ECO:0007744" key="10">
    <source>
    </source>
</evidence>
<evidence type="ECO:0007744" key="11">
    <source>
    </source>
</evidence>
<evidence type="ECO:0007744" key="12">
    <source>
    </source>
</evidence>
<evidence type="ECO:0007744" key="13">
    <source>
    </source>
</evidence>